<evidence type="ECO:0000250" key="1">
    <source>
        <dbReference type="UniProtKB" id="Q9BSK4"/>
    </source>
</evidence>
<evidence type="ECO:0000303" key="2">
    <source ref="1"/>
</evidence>
<evidence type="ECO:0000305" key="3"/>
<dbReference type="EMBL" id="BC060522">
    <property type="protein sequence ID" value="AAH60522.1"/>
    <property type="molecule type" value="mRNA"/>
</dbReference>
<dbReference type="RefSeq" id="NP_956131.1">
    <property type="nucleotide sequence ID" value="NM_199837.1"/>
</dbReference>
<dbReference type="SMR" id="Q6P9Z4"/>
<dbReference type="FunCoup" id="Q6P9Z4">
    <property type="interactions" value="1566"/>
</dbReference>
<dbReference type="PaxDb" id="7955-ENSDARP00000110111"/>
<dbReference type="GeneID" id="327613"/>
<dbReference type="KEGG" id="dre:327613"/>
<dbReference type="AGR" id="ZFIN:ZDB-GENE-030131-5824"/>
<dbReference type="CTD" id="55527"/>
<dbReference type="ZFIN" id="ZDB-GENE-030131-5824">
    <property type="gene designation" value="fem1a"/>
</dbReference>
<dbReference type="eggNOG" id="KOG0508">
    <property type="taxonomic scope" value="Eukaryota"/>
</dbReference>
<dbReference type="InParanoid" id="Q6P9Z4"/>
<dbReference type="OrthoDB" id="4429489at2759"/>
<dbReference type="PhylomeDB" id="Q6P9Z4"/>
<dbReference type="Reactome" id="R-DRE-8951664">
    <property type="pathway name" value="Neddylation"/>
</dbReference>
<dbReference type="UniPathway" id="UPA00143"/>
<dbReference type="PRO" id="PR:Q6P9Z4"/>
<dbReference type="Proteomes" id="UP000000437">
    <property type="component" value="Chromosome 2"/>
</dbReference>
<dbReference type="GO" id="GO:0031462">
    <property type="term" value="C:Cul2-RING ubiquitin ligase complex"/>
    <property type="evidence" value="ECO:0000250"/>
    <property type="project" value="UniProtKB"/>
</dbReference>
<dbReference type="GO" id="GO:0005739">
    <property type="term" value="C:mitochondrion"/>
    <property type="evidence" value="ECO:0000250"/>
    <property type="project" value="UniProtKB"/>
</dbReference>
<dbReference type="GO" id="GO:0000151">
    <property type="term" value="C:ubiquitin ligase complex"/>
    <property type="evidence" value="ECO:0000318"/>
    <property type="project" value="GO_Central"/>
</dbReference>
<dbReference type="GO" id="GO:1990756">
    <property type="term" value="F:ubiquitin-like ligase-substrate adaptor activity"/>
    <property type="evidence" value="ECO:0000250"/>
    <property type="project" value="UniProtKB"/>
</dbReference>
<dbReference type="GO" id="GO:0050728">
    <property type="term" value="P:negative regulation of inflammatory response"/>
    <property type="evidence" value="ECO:0000318"/>
    <property type="project" value="GO_Central"/>
</dbReference>
<dbReference type="GO" id="GO:0050729">
    <property type="term" value="P:positive regulation of inflammatory response"/>
    <property type="evidence" value="ECO:0000250"/>
    <property type="project" value="UniProtKB"/>
</dbReference>
<dbReference type="GO" id="GO:0043161">
    <property type="term" value="P:proteasome-mediated ubiquitin-dependent protein catabolic process"/>
    <property type="evidence" value="ECO:0000318"/>
    <property type="project" value="GO_Central"/>
</dbReference>
<dbReference type="GO" id="GO:0016567">
    <property type="term" value="P:protein ubiquitination"/>
    <property type="evidence" value="ECO:0007669"/>
    <property type="project" value="UniProtKB-UniPathway"/>
</dbReference>
<dbReference type="GO" id="GO:0051438">
    <property type="term" value="P:regulation of ubiquitin-protein transferase activity"/>
    <property type="evidence" value="ECO:0000250"/>
    <property type="project" value="UniProtKB"/>
</dbReference>
<dbReference type="GO" id="GO:0140627">
    <property type="term" value="P:ubiquitin-dependent protein catabolic process via the C-end degron rule pathway"/>
    <property type="evidence" value="ECO:0000250"/>
    <property type="project" value="UniProtKB"/>
</dbReference>
<dbReference type="FunFam" id="1.25.40.10:FF:000104">
    <property type="entry name" value="Fem-1 homolog c (C.elegans)"/>
    <property type="match status" value="1"/>
</dbReference>
<dbReference type="FunFam" id="1.25.40.20:FF:000133">
    <property type="entry name" value="protein fem-1 homolog A"/>
    <property type="match status" value="1"/>
</dbReference>
<dbReference type="Gene3D" id="1.25.40.20">
    <property type="entry name" value="Ankyrin repeat-containing domain"/>
    <property type="match status" value="3"/>
</dbReference>
<dbReference type="Gene3D" id="1.25.40.10">
    <property type="entry name" value="Tetratricopeptide repeat domain"/>
    <property type="match status" value="1"/>
</dbReference>
<dbReference type="InterPro" id="IPR002110">
    <property type="entry name" value="Ankyrin_rpt"/>
</dbReference>
<dbReference type="InterPro" id="IPR036770">
    <property type="entry name" value="Ankyrin_rpt-contain_sf"/>
</dbReference>
<dbReference type="InterPro" id="IPR011990">
    <property type="entry name" value="TPR-like_helical_dom_sf"/>
</dbReference>
<dbReference type="PANTHER" id="PTHR24173">
    <property type="entry name" value="ANKYRIN REPEAT CONTAINING"/>
    <property type="match status" value="1"/>
</dbReference>
<dbReference type="PANTHER" id="PTHR24173:SF78">
    <property type="entry name" value="PROTEIN FEM-1 HOMOLOG B"/>
    <property type="match status" value="1"/>
</dbReference>
<dbReference type="Pfam" id="PF00023">
    <property type="entry name" value="Ank"/>
    <property type="match status" value="1"/>
</dbReference>
<dbReference type="Pfam" id="PF12796">
    <property type="entry name" value="Ank_2"/>
    <property type="match status" value="3"/>
</dbReference>
<dbReference type="PRINTS" id="PR01415">
    <property type="entry name" value="ANKYRIN"/>
</dbReference>
<dbReference type="SMART" id="SM00248">
    <property type="entry name" value="ANK"/>
    <property type="match status" value="8"/>
</dbReference>
<dbReference type="SUPFAM" id="SSF48403">
    <property type="entry name" value="Ankyrin repeat"/>
    <property type="match status" value="2"/>
</dbReference>
<dbReference type="PROSITE" id="PS50297">
    <property type="entry name" value="ANK_REP_REGION"/>
    <property type="match status" value="2"/>
</dbReference>
<dbReference type="PROSITE" id="PS50088">
    <property type="entry name" value="ANK_REPEAT"/>
    <property type="match status" value="7"/>
</dbReference>
<sequence length="617" mass="68011">MDISAAVFNAARDGKLKLMQKLLINKSPEERAALAEERTEGGTPLLIAARYGHLPVVHFLLERCGANVALGGSVNFDGETIEGAPPLWAASAAGHLPVVKALLEHGAPVNNTTLTNSTPLRAACFDGHLEIVRYLVEHQADLEVANRHGHTCLMISCYKGHREIAQFLLEKGADVNRKSVKGNTALHDCAESGSLEIMKMLLKCDARMERDGYGMTPLLAASVTGHTNIVEFLVHQPRASREQRIHALELLGATFVDKKRDLLGAMRYWRRAMELRWAGGQAGALEKPTAGPLVPAYDCSREVSTAEELEALITDPDDMRMQALLVRERILGPAHPDTSYYIRYRGAVYADSGNFERCIRLWKYALDMQQSNLEPLSPMTASSFLSFAELFSFVLQDRAKGTLAARVSFQDLMGVLSKSVREVERAVAQRERPPEPPQFSKALSIILHLLFLLQKLRCGPEQEHLKRQTVYRLLKLNPRARGGHTPLHMAVDRDTTSVGRYPVGRFPSLAVASLLLECGADVDSRDYDNNTPLHIAAANGCPDIMAALIRAGAHFDATNAAQQTAYQLLEAQSSGRHALHPLNHTTLQCLAARAVTAHRLPYKGLISEQMEAFIELH</sequence>
<organism>
    <name type="scientific">Danio rerio</name>
    <name type="common">Zebrafish</name>
    <name type="synonym">Brachydanio rerio</name>
    <dbReference type="NCBI Taxonomy" id="7955"/>
    <lineage>
        <taxon>Eukaryota</taxon>
        <taxon>Metazoa</taxon>
        <taxon>Chordata</taxon>
        <taxon>Craniata</taxon>
        <taxon>Vertebrata</taxon>
        <taxon>Euteleostomi</taxon>
        <taxon>Actinopterygii</taxon>
        <taxon>Neopterygii</taxon>
        <taxon>Teleostei</taxon>
        <taxon>Ostariophysi</taxon>
        <taxon>Cypriniformes</taxon>
        <taxon>Danionidae</taxon>
        <taxon>Danioninae</taxon>
        <taxon>Danio</taxon>
    </lineage>
</organism>
<name>FEM1A_DANRE</name>
<comment type="function">
    <text evidence="1">Substrate-recognition component of a Cul2-RING (CRL2) E3 ubiquitin-protein ligase complex of the DesCEND (destruction via C-end degrons) pathway, which recognizes a C-degron located at the extreme C terminus of target proteins, leading to their ubiquitination and degradation. The C-degron recognized by the DesCEND pathway is usually a motif of less than ten residues and can be present in full-length proteins, truncated proteins or proteolytically cleaved forms. The CRL2(FEM1A) complex specifically recognizes proteins with an arginine at the C-terminus: recognizes and binds proteins ending with -Lys/Arg-Xaa-Arg and -Lys/Arg-Xaa-Xaa-Arg C-degrons, leading to their ubiquitination and degradation.</text>
</comment>
<comment type="pathway">
    <text evidence="1">Protein modification; protein ubiquitination.</text>
</comment>
<comment type="subunit">
    <text evidence="1">Component of a CRL2 E3 ubiquitin-protein ligase complex, also named ECS (Elongin BC-CUL2/5-SOCS-box protein) complex.</text>
</comment>
<comment type="subcellular location">
    <subcellularLocation>
        <location evidence="1">Mitochondrion</location>
    </subcellularLocation>
    <subcellularLocation>
        <location evidence="1">Cytoplasm</location>
    </subcellularLocation>
</comment>
<comment type="similarity">
    <text evidence="3">Belongs to the fem-1 family.</text>
</comment>
<reference key="1">
    <citation type="submission" date="2003-10" db="EMBL/GenBank/DDBJ databases">
        <authorList>
            <consortium name="NIH - Zebrafish Gene Collection (ZGC) project"/>
        </authorList>
    </citation>
    <scope>NUCLEOTIDE SEQUENCE [LARGE SCALE MRNA]</scope>
    <source>
        <strain>AB</strain>
    </source>
</reference>
<accession>Q6P9Z4</accession>
<feature type="chain" id="PRO_0000324529" description="Protein fem-1 homolog A">
    <location>
        <begin position="1"/>
        <end position="617"/>
    </location>
</feature>
<feature type="repeat" description="ANK 1">
    <location>
        <begin position="2"/>
        <end position="32"/>
    </location>
</feature>
<feature type="repeat" description="ANK 2">
    <location>
        <begin position="40"/>
        <end position="70"/>
    </location>
</feature>
<feature type="repeat" description="ANK 3">
    <location>
        <begin position="82"/>
        <end position="111"/>
    </location>
</feature>
<feature type="repeat" description="ANK 4">
    <location>
        <begin position="115"/>
        <end position="144"/>
    </location>
</feature>
<feature type="repeat" description="ANK 5">
    <location>
        <begin position="148"/>
        <end position="177"/>
    </location>
</feature>
<feature type="repeat" description="ANK 6">
    <location>
        <begin position="181"/>
        <end position="210"/>
    </location>
</feature>
<feature type="repeat" description="ANK 7">
    <location>
        <begin position="213"/>
        <end position="242"/>
    </location>
</feature>
<feature type="repeat" description="TPR 1">
    <location>
        <begin position="245"/>
        <end position="279"/>
    </location>
</feature>
<feature type="repeat" description="TPR 2">
    <location>
        <begin position="339"/>
        <end position="372"/>
    </location>
</feature>
<feature type="repeat" description="ANK 8">
    <location>
        <begin position="482"/>
        <end position="524"/>
    </location>
</feature>
<feature type="repeat" description="ANK 9">
    <location>
        <begin position="528"/>
        <end position="557"/>
    </location>
</feature>
<gene>
    <name evidence="1" type="primary">fem1a</name>
    <name evidence="2" type="ORF">zgc:63483</name>
</gene>
<keyword id="KW-0040">ANK repeat</keyword>
<keyword id="KW-0963">Cytoplasm</keyword>
<keyword id="KW-0496">Mitochondrion</keyword>
<keyword id="KW-1185">Reference proteome</keyword>
<keyword id="KW-0677">Repeat</keyword>
<keyword id="KW-0802">TPR repeat</keyword>
<keyword id="KW-0833">Ubl conjugation pathway</keyword>
<proteinExistence type="evidence at transcript level"/>
<protein>
    <recommendedName>
        <fullName evidence="3">Protein fem-1 homolog A</fullName>
        <shortName evidence="3">FEM1a</shortName>
    </recommendedName>
    <alternativeName>
        <fullName evidence="3">FEM1-alpha</fullName>
    </alternativeName>
</protein>